<proteinExistence type="inferred from homology"/>
<organism>
    <name type="scientific">Flavobacterium johnsoniae (strain ATCC 17061 / DSM 2064 / JCM 8514 / BCRC 14874 / CCUG 350202 / NBRC 14942 / NCIMB 11054 / UW101)</name>
    <name type="common">Cytophaga johnsonae</name>
    <dbReference type="NCBI Taxonomy" id="376686"/>
    <lineage>
        <taxon>Bacteria</taxon>
        <taxon>Pseudomonadati</taxon>
        <taxon>Bacteroidota</taxon>
        <taxon>Flavobacteriia</taxon>
        <taxon>Flavobacteriales</taxon>
        <taxon>Flavobacteriaceae</taxon>
        <taxon>Flavobacterium</taxon>
    </lineage>
</organism>
<accession>A5FL73</accession>
<sequence length="501" mass="57365">MSKQVRVRFAPSPTGPLHIGGVRTALFNYLFAKKHNGVFYLRIEDTDQTRFVPGAEAYIMEALEWLGISPEETVGKNEKFGPYRQSDRKDLYQKYADQLINSGWAYYAFDTPEALDAHRKQHEAEGKTFIYNHHNREKLDTSLVISAEETAKRIANGEHYVIRFKTPVDETLHLKDIIRGDVKFETNLLDDKVLFKSDGMPTYHLANIVDDHLMETSHVIRGEEWLPSMPLHVLLYRAFGWDAPEFAHLPLILKPVGNGKLSKRDGDKLGFPVFPLEWKTEEGVSSGYREKGFFPEAVVNFLALLGWNDGTDKELFSLEELVEAFDLNRVHKAGAKFDPEKNKWFNHQYLIKQNDADLAKSFSTILEEKGFSTPLEVTTRIVSLIKERAHFVSEFWDLTDFFFQAPSSYDEKASKNWKEETPALMKELISVLENIEDFTSANIETIVKEWLTKNEIGMGKVMQPFRLSLVGALKGPHLFDIVEIIGKEETVSRIQKAISAL</sequence>
<evidence type="ECO:0000255" key="1">
    <source>
        <dbReference type="HAMAP-Rule" id="MF_00022"/>
    </source>
</evidence>
<keyword id="KW-0030">Aminoacyl-tRNA synthetase</keyword>
<keyword id="KW-0067">ATP-binding</keyword>
<keyword id="KW-0963">Cytoplasm</keyword>
<keyword id="KW-0436">Ligase</keyword>
<keyword id="KW-0547">Nucleotide-binding</keyword>
<keyword id="KW-0648">Protein biosynthesis</keyword>
<reference key="1">
    <citation type="journal article" date="2009" name="Appl. Environ. Microbiol.">
        <title>Novel features of the polysaccharide-digesting gliding bacterium Flavobacterium johnsoniae as revealed by genome sequence analysis.</title>
        <authorList>
            <person name="McBride M.J."/>
            <person name="Xie G."/>
            <person name="Martens E.C."/>
            <person name="Lapidus A."/>
            <person name="Henrissat B."/>
            <person name="Rhodes R.G."/>
            <person name="Goltsman E."/>
            <person name="Wang W."/>
            <person name="Xu J."/>
            <person name="Hunnicutt D.W."/>
            <person name="Staroscik A.M."/>
            <person name="Hoover T.R."/>
            <person name="Cheng Y.Q."/>
            <person name="Stein J.L."/>
        </authorList>
    </citation>
    <scope>NUCLEOTIDE SEQUENCE [LARGE SCALE GENOMIC DNA]</scope>
    <source>
        <strain>ATCC 17061 / DSM 2064 / JCM 8514 / BCRC 14874 / CCUG 350202 / NBRC 14942 / NCIMB 11054 / UW101</strain>
    </source>
</reference>
<protein>
    <recommendedName>
        <fullName evidence="1">Glutamate--tRNA ligase</fullName>
        <ecNumber evidence="1">6.1.1.17</ecNumber>
    </recommendedName>
    <alternativeName>
        <fullName evidence="1">Glutamyl-tRNA synthetase</fullName>
        <shortName evidence="1">GluRS</shortName>
    </alternativeName>
</protein>
<comment type="function">
    <text evidence="1">Catalyzes the attachment of glutamate to tRNA(Glu) in a two-step reaction: glutamate is first activated by ATP to form Glu-AMP and then transferred to the acceptor end of tRNA(Glu).</text>
</comment>
<comment type="catalytic activity">
    <reaction evidence="1">
        <text>tRNA(Glu) + L-glutamate + ATP = L-glutamyl-tRNA(Glu) + AMP + diphosphate</text>
        <dbReference type="Rhea" id="RHEA:23540"/>
        <dbReference type="Rhea" id="RHEA-COMP:9663"/>
        <dbReference type="Rhea" id="RHEA-COMP:9680"/>
        <dbReference type="ChEBI" id="CHEBI:29985"/>
        <dbReference type="ChEBI" id="CHEBI:30616"/>
        <dbReference type="ChEBI" id="CHEBI:33019"/>
        <dbReference type="ChEBI" id="CHEBI:78442"/>
        <dbReference type="ChEBI" id="CHEBI:78520"/>
        <dbReference type="ChEBI" id="CHEBI:456215"/>
        <dbReference type="EC" id="6.1.1.17"/>
    </reaction>
</comment>
<comment type="subunit">
    <text evidence="1">Monomer.</text>
</comment>
<comment type="subcellular location">
    <subcellularLocation>
        <location evidence="1">Cytoplasm</location>
    </subcellularLocation>
</comment>
<comment type="similarity">
    <text evidence="1">Belongs to the class-I aminoacyl-tRNA synthetase family. Glutamate--tRNA ligase type 1 subfamily.</text>
</comment>
<feature type="chain" id="PRO_0000330970" description="Glutamate--tRNA ligase">
    <location>
        <begin position="1"/>
        <end position="501"/>
    </location>
</feature>
<feature type="short sequence motif" description="'HIGH' region" evidence="1">
    <location>
        <begin position="11"/>
        <end position="21"/>
    </location>
</feature>
<feature type="short sequence motif" description="'KMSKS' region" evidence="1">
    <location>
        <begin position="260"/>
        <end position="264"/>
    </location>
</feature>
<feature type="binding site" evidence="1">
    <location>
        <position position="263"/>
    </location>
    <ligand>
        <name>ATP</name>
        <dbReference type="ChEBI" id="CHEBI:30616"/>
    </ligand>
</feature>
<dbReference type="EC" id="6.1.1.17" evidence="1"/>
<dbReference type="EMBL" id="CP000685">
    <property type="protein sequence ID" value="ABQ04039.1"/>
    <property type="molecule type" value="Genomic_DNA"/>
</dbReference>
<dbReference type="RefSeq" id="WP_012023092.1">
    <property type="nucleotide sequence ID" value="NC_009441.1"/>
</dbReference>
<dbReference type="SMR" id="A5FL73"/>
<dbReference type="STRING" id="376686.Fjoh_1006"/>
<dbReference type="KEGG" id="fjo:Fjoh_1006"/>
<dbReference type="eggNOG" id="COG0008">
    <property type="taxonomic scope" value="Bacteria"/>
</dbReference>
<dbReference type="eggNOG" id="COG1384">
    <property type="taxonomic scope" value="Bacteria"/>
</dbReference>
<dbReference type="HOGENOM" id="CLU_015768_6_3_10"/>
<dbReference type="OrthoDB" id="9807503at2"/>
<dbReference type="Proteomes" id="UP000006694">
    <property type="component" value="Chromosome"/>
</dbReference>
<dbReference type="GO" id="GO:0005829">
    <property type="term" value="C:cytosol"/>
    <property type="evidence" value="ECO:0007669"/>
    <property type="project" value="TreeGrafter"/>
</dbReference>
<dbReference type="GO" id="GO:0005524">
    <property type="term" value="F:ATP binding"/>
    <property type="evidence" value="ECO:0007669"/>
    <property type="project" value="UniProtKB-UniRule"/>
</dbReference>
<dbReference type="GO" id="GO:0004818">
    <property type="term" value="F:glutamate-tRNA ligase activity"/>
    <property type="evidence" value="ECO:0007669"/>
    <property type="project" value="UniProtKB-UniRule"/>
</dbReference>
<dbReference type="GO" id="GO:0000049">
    <property type="term" value="F:tRNA binding"/>
    <property type="evidence" value="ECO:0007669"/>
    <property type="project" value="InterPro"/>
</dbReference>
<dbReference type="GO" id="GO:0008270">
    <property type="term" value="F:zinc ion binding"/>
    <property type="evidence" value="ECO:0007669"/>
    <property type="project" value="InterPro"/>
</dbReference>
<dbReference type="GO" id="GO:0006424">
    <property type="term" value="P:glutamyl-tRNA aminoacylation"/>
    <property type="evidence" value="ECO:0007669"/>
    <property type="project" value="UniProtKB-UniRule"/>
</dbReference>
<dbReference type="CDD" id="cd00808">
    <property type="entry name" value="GluRS_core"/>
    <property type="match status" value="1"/>
</dbReference>
<dbReference type="FunFam" id="3.40.50.620:FF:000127">
    <property type="entry name" value="Glutamate--tRNA ligase"/>
    <property type="match status" value="1"/>
</dbReference>
<dbReference type="Gene3D" id="1.10.10.350">
    <property type="match status" value="1"/>
</dbReference>
<dbReference type="Gene3D" id="3.40.50.620">
    <property type="entry name" value="HUPs"/>
    <property type="match status" value="1"/>
</dbReference>
<dbReference type="HAMAP" id="MF_00022">
    <property type="entry name" value="Glu_tRNA_synth_type1"/>
    <property type="match status" value="1"/>
</dbReference>
<dbReference type="InterPro" id="IPR045462">
    <property type="entry name" value="aa-tRNA-synth_I_cd-bd"/>
</dbReference>
<dbReference type="InterPro" id="IPR020751">
    <property type="entry name" value="aa-tRNA-synth_I_codon-bd_sub2"/>
</dbReference>
<dbReference type="InterPro" id="IPR001412">
    <property type="entry name" value="aa-tRNA-synth_I_CS"/>
</dbReference>
<dbReference type="InterPro" id="IPR008925">
    <property type="entry name" value="aa_tRNA-synth_I_cd-bd_sf"/>
</dbReference>
<dbReference type="InterPro" id="IPR004527">
    <property type="entry name" value="Glu-tRNA-ligase_bac/mito"/>
</dbReference>
<dbReference type="InterPro" id="IPR000924">
    <property type="entry name" value="Glu/Gln-tRNA-synth"/>
</dbReference>
<dbReference type="InterPro" id="IPR020058">
    <property type="entry name" value="Glu/Gln-tRNA-synth_Ib_cat-dom"/>
</dbReference>
<dbReference type="InterPro" id="IPR049940">
    <property type="entry name" value="GluQ/Sye"/>
</dbReference>
<dbReference type="InterPro" id="IPR033910">
    <property type="entry name" value="GluRS_core"/>
</dbReference>
<dbReference type="InterPro" id="IPR014729">
    <property type="entry name" value="Rossmann-like_a/b/a_fold"/>
</dbReference>
<dbReference type="NCBIfam" id="TIGR00464">
    <property type="entry name" value="gltX_bact"/>
    <property type="match status" value="1"/>
</dbReference>
<dbReference type="PANTHER" id="PTHR43311">
    <property type="entry name" value="GLUTAMATE--TRNA LIGASE"/>
    <property type="match status" value="1"/>
</dbReference>
<dbReference type="PANTHER" id="PTHR43311:SF2">
    <property type="entry name" value="GLUTAMATE--TRNA LIGASE, MITOCHONDRIAL-RELATED"/>
    <property type="match status" value="1"/>
</dbReference>
<dbReference type="Pfam" id="PF19269">
    <property type="entry name" value="Anticodon_2"/>
    <property type="match status" value="1"/>
</dbReference>
<dbReference type="Pfam" id="PF00749">
    <property type="entry name" value="tRNA-synt_1c"/>
    <property type="match status" value="1"/>
</dbReference>
<dbReference type="PRINTS" id="PR00987">
    <property type="entry name" value="TRNASYNTHGLU"/>
</dbReference>
<dbReference type="SUPFAM" id="SSF48163">
    <property type="entry name" value="An anticodon-binding domain of class I aminoacyl-tRNA synthetases"/>
    <property type="match status" value="1"/>
</dbReference>
<dbReference type="SUPFAM" id="SSF52374">
    <property type="entry name" value="Nucleotidylyl transferase"/>
    <property type="match status" value="1"/>
</dbReference>
<dbReference type="PROSITE" id="PS00178">
    <property type="entry name" value="AA_TRNA_LIGASE_I"/>
    <property type="match status" value="1"/>
</dbReference>
<name>SYE_FLAJ1</name>
<gene>
    <name evidence="1" type="primary">gltX</name>
    <name type="ordered locus">Fjoh_1006</name>
</gene>